<proteinExistence type="evidence at protein level"/>
<keyword id="KW-0053">Apoptosis</keyword>
<keyword id="KW-0067">ATP-binding</keyword>
<keyword id="KW-0175">Coiled coil</keyword>
<keyword id="KW-0963">Cytoplasm</keyword>
<keyword id="KW-0418">Kinase</keyword>
<keyword id="KW-0547">Nucleotide-binding</keyword>
<keyword id="KW-0597">Phosphoprotein</keyword>
<keyword id="KW-1185">Reference proteome</keyword>
<keyword id="KW-0723">Serine/threonine-protein kinase</keyword>
<keyword id="KW-0808">Transferase</keyword>
<comment type="function">
    <text evidence="1">Mediates apoptosis and actin stress fiber dissolution.</text>
</comment>
<comment type="catalytic activity">
    <reaction>
        <text>L-seryl-[protein] + ATP = O-phospho-L-seryl-[protein] + ADP + H(+)</text>
        <dbReference type="Rhea" id="RHEA:17989"/>
        <dbReference type="Rhea" id="RHEA-COMP:9863"/>
        <dbReference type="Rhea" id="RHEA-COMP:11604"/>
        <dbReference type="ChEBI" id="CHEBI:15378"/>
        <dbReference type="ChEBI" id="CHEBI:29999"/>
        <dbReference type="ChEBI" id="CHEBI:30616"/>
        <dbReference type="ChEBI" id="CHEBI:83421"/>
        <dbReference type="ChEBI" id="CHEBI:456216"/>
        <dbReference type="EC" id="2.7.11.1"/>
    </reaction>
</comment>
<comment type="catalytic activity">
    <reaction>
        <text>L-threonyl-[protein] + ATP = O-phospho-L-threonyl-[protein] + ADP + H(+)</text>
        <dbReference type="Rhea" id="RHEA:46608"/>
        <dbReference type="Rhea" id="RHEA-COMP:11060"/>
        <dbReference type="Rhea" id="RHEA-COMP:11605"/>
        <dbReference type="ChEBI" id="CHEBI:15378"/>
        <dbReference type="ChEBI" id="CHEBI:30013"/>
        <dbReference type="ChEBI" id="CHEBI:30616"/>
        <dbReference type="ChEBI" id="CHEBI:61977"/>
        <dbReference type="ChEBI" id="CHEBI:456216"/>
        <dbReference type="EC" id="2.7.11.1"/>
    </reaction>
</comment>
<comment type="subcellular location">
    <subcellularLocation>
        <location evidence="1">Cytoplasm</location>
    </subcellularLocation>
</comment>
<comment type="tissue specificity">
    <text evidence="10">Ubiquitously expressed.</text>
</comment>
<comment type="PTM">
    <text evidence="1">Proteolytically cleaved by caspase-3.</text>
</comment>
<comment type="PTM">
    <text evidence="10">Autophosphorylated.</text>
</comment>
<comment type="similarity">
    <text evidence="11">Belongs to the protein kinase superfamily. STE Ser/Thr protein kinase family. STE20 subfamily.</text>
</comment>
<sequence length="1231" mass="141082">MSFFNFRKIFKLGSEKKKKQYEHVKRDLNPEEFWETIGELGDGAFGKVYKAQNKETNVLAAAKVIDTKSEEELEDYMVEIDILASCDHPNIVKLLDAFYYENNLWILIEFCAGGAVDAVMLELERPLTESQIQVVCKQTLEALNYLHDNKIIHRDLKAGNILFTLDGDIKLADFGVSAKNTRTIQRRDSFIGTPYWMAPEVVMCETSKDRPYDYKADVWSLGITLIEMAEIEPPHHELNPMRVLLKIAKSEPPTLAQPSRWSSNFKDFLKKCLEKNVDARWTTSQLLQHPFVTIDSNKPIRELIAEAKAEVTEEVEDGKEEDDDEEIENSLPIPTNKRASSDLSIASSEEDKLSQNACILESVSEKTEHNASGDKFSTKVLNEKPCPGEPENAVELVGGAVAVLPDRATELPESGREEKRPKLDRLPDTEDQEMADINSVSEGEEDHAVTSETNIEHNLKPEKERDQEKQPVLENKLVKSEDTTIQTVDLVSQETGEKEVDIHILDSEVVHAVEDTHEKLRKDDTTQKDVISDTSSVGERDEEIGAVPKTAESSAEGAQGDGGKETDEGAQILISKATEGPKASGTEEAPPVTEITETNDTDQKLVENTHEKQLPISSETTLDTSEGLGASEGREVTESGSTEEVEVEGAVSETDEEDVQSETRGAPMAVTQMDTEKNETPHEAPAQVEVQVPVPPQPSEPPPAPIPSININSEAAENKGEMGASLNTETILLPESESQKENDTDSGTGSTADNSSIDLNLSISSFLSKTKDNGSISLQETRRQKKTLKKTRKFIVDGVEVSVTTSKIVTDSDSKTEELRFLRRQELRELRFLQKEEQRAQQQLNGKLQQQREQIFRRFEQEMMSKKRQYDQEIENLEKQQKQTIERLEQEHTNRLRDEAKRIKGEQEKELSKFQNILKNRKKEVLNEVEKAPKDLRKELMKRRKEELAQSQHVQEQDFVQKQQQELDGSLKKIIQQQKAELANIERECLNNKQQLMRAREAAIWELEERHLQEKHQLLKQQLKDQYFMQRHQLLKRHEKETEQMQRYNQRLIEELKNRQTQERARLPKIQRSEAKTRMAMFKKSLRINSTATPDQDRDKIKQFSAQEEKRQKNERMAQHQKHENQMRDLQLQCEANVRELHQLQNEKCHLLVEHETQKLKELDEEHSQELKEWREKLRPRKKTLEEEFARKLQEQEVFFKMTGESECLNPSTQSRISKFYPIPSLHSTGS</sequence>
<feature type="chain" id="PRO_0000233238" description="STE20-like serine/threonine-protein kinase">
    <location>
        <begin position="1"/>
        <end position="1231"/>
    </location>
</feature>
<feature type="domain" description="Protein kinase" evidence="6">
    <location>
        <begin position="34"/>
        <end position="292"/>
    </location>
</feature>
<feature type="domain" description="UVR" evidence="7">
    <location>
        <begin position="871"/>
        <end position="906"/>
    </location>
</feature>
<feature type="region of interest" description="Disordered" evidence="9">
    <location>
        <begin position="309"/>
        <end position="351"/>
    </location>
</feature>
<feature type="region of interest" description="Disordered" evidence="9">
    <location>
        <begin position="405"/>
        <end position="478"/>
    </location>
</feature>
<feature type="region of interest" description="Disordered" evidence="9">
    <location>
        <begin position="516"/>
        <end position="757"/>
    </location>
</feature>
<feature type="coiled-coil region" evidence="5">
    <location>
        <begin position="822"/>
        <end position="1065"/>
    </location>
</feature>
<feature type="coiled-coil region" evidence="5">
    <location>
        <begin position="1105"/>
        <end position="1179"/>
    </location>
</feature>
<feature type="compositionally biased region" description="Acidic residues" evidence="9">
    <location>
        <begin position="312"/>
        <end position="328"/>
    </location>
</feature>
<feature type="compositionally biased region" description="Polar residues" evidence="9">
    <location>
        <begin position="337"/>
        <end position="347"/>
    </location>
</feature>
<feature type="compositionally biased region" description="Basic and acidic residues" evidence="9">
    <location>
        <begin position="407"/>
        <end position="428"/>
    </location>
</feature>
<feature type="compositionally biased region" description="Basic and acidic residues" evidence="9">
    <location>
        <begin position="446"/>
        <end position="478"/>
    </location>
</feature>
<feature type="compositionally biased region" description="Basic and acidic residues" evidence="9">
    <location>
        <begin position="516"/>
        <end position="531"/>
    </location>
</feature>
<feature type="compositionally biased region" description="Basic and acidic residues" evidence="9">
    <location>
        <begin position="601"/>
        <end position="613"/>
    </location>
</feature>
<feature type="compositionally biased region" description="Polar residues" evidence="9">
    <location>
        <begin position="615"/>
        <end position="624"/>
    </location>
</feature>
<feature type="compositionally biased region" description="Acidic residues" evidence="9">
    <location>
        <begin position="641"/>
        <end position="660"/>
    </location>
</feature>
<feature type="compositionally biased region" description="Low complexity" evidence="9">
    <location>
        <begin position="683"/>
        <end position="692"/>
    </location>
</feature>
<feature type="compositionally biased region" description="Pro residues" evidence="9">
    <location>
        <begin position="693"/>
        <end position="706"/>
    </location>
</feature>
<feature type="active site" description="Proton acceptor" evidence="6 8">
    <location>
        <position position="155"/>
    </location>
</feature>
<feature type="binding site" evidence="6">
    <location>
        <begin position="40"/>
        <end position="48"/>
    </location>
    <ligand>
        <name>ATP</name>
        <dbReference type="ChEBI" id="CHEBI:30616"/>
    </ligand>
</feature>
<feature type="binding site" evidence="6">
    <location>
        <position position="63"/>
    </location>
    <ligand>
        <name>ATP</name>
        <dbReference type="ChEBI" id="CHEBI:30616"/>
    </ligand>
</feature>
<feature type="site" description="Cleavage; by caspase-3" evidence="1">
    <location>
        <begin position="431"/>
        <end position="432"/>
    </location>
</feature>
<feature type="modified residue" description="Phosphoserine" evidence="4">
    <location>
        <position position="14"/>
    </location>
</feature>
<feature type="modified residue" description="Phosphothreonine" evidence="3">
    <location>
        <position position="183"/>
    </location>
</feature>
<feature type="modified residue" description="Phosphoserine" evidence="4">
    <location>
        <position position="189"/>
    </location>
</feature>
<feature type="modified residue" description="Phosphoserine" evidence="4">
    <location>
        <position position="330"/>
    </location>
</feature>
<feature type="modified residue" description="Phosphoserine" evidence="2">
    <location>
        <position position="340"/>
    </location>
</feature>
<feature type="modified residue" description="Phosphoserine" evidence="4">
    <location>
        <position position="341"/>
    </location>
</feature>
<feature type="modified residue" description="Phosphoserine" evidence="4">
    <location>
        <position position="344"/>
    </location>
</feature>
<feature type="modified residue" description="Phosphoserine" evidence="4">
    <location>
        <position position="347"/>
    </location>
</feature>
<feature type="modified residue" description="Phosphoserine" evidence="4">
    <location>
        <position position="348"/>
    </location>
</feature>
<feature type="modified residue" description="Phosphoserine" evidence="3">
    <location>
        <position position="354"/>
    </location>
</feature>
<feature type="modified residue" description="Phosphoserine" evidence="4">
    <location>
        <position position="372"/>
    </location>
</feature>
<feature type="modified residue" description="Phosphoserine" evidence="4">
    <location>
        <position position="507"/>
    </location>
</feature>
<feature type="modified residue" description="Phosphoserine" evidence="3">
    <location>
        <position position="536"/>
    </location>
</feature>
<feature type="modified residue" description="Phosphoserine" evidence="4">
    <location>
        <position position="554"/>
    </location>
</feature>
<feature type="modified residue" description="Phosphoserine" evidence="3">
    <location>
        <position position="641"/>
    </location>
</feature>
<feature type="modified residue" description="Phosphoserine" evidence="3">
    <location>
        <position position="661"/>
    </location>
</feature>
<feature type="modified residue" description="Phosphoserine" evidence="4">
    <location>
        <position position="775"/>
    </location>
</feature>
<feature type="modified residue" description="Phosphothreonine" evidence="4">
    <location>
        <position position="810"/>
    </location>
</feature>
<feature type="modified residue" description="Phosphoserine" evidence="4">
    <location>
        <position position="814"/>
    </location>
</feature>
<feature type="modified residue" description="Phosphothreonine" evidence="4">
    <location>
        <position position="1093"/>
    </location>
</feature>
<gene>
    <name type="primary">SLK</name>
</gene>
<organism>
    <name type="scientific">Cavia porcellus</name>
    <name type="common">Guinea pig</name>
    <dbReference type="NCBI Taxonomy" id="10141"/>
    <lineage>
        <taxon>Eukaryota</taxon>
        <taxon>Metazoa</taxon>
        <taxon>Chordata</taxon>
        <taxon>Craniata</taxon>
        <taxon>Vertebrata</taxon>
        <taxon>Euteleostomi</taxon>
        <taxon>Mammalia</taxon>
        <taxon>Eutheria</taxon>
        <taxon>Euarchontoglires</taxon>
        <taxon>Glires</taxon>
        <taxon>Rodentia</taxon>
        <taxon>Hystricomorpha</taxon>
        <taxon>Caviidae</taxon>
        <taxon>Cavia</taxon>
    </lineage>
</organism>
<accession>O55092</accession>
<dbReference type="EC" id="2.7.11.1"/>
<dbReference type="EMBL" id="D88425">
    <property type="protein sequence ID" value="BAA24930.1"/>
    <property type="molecule type" value="mRNA"/>
</dbReference>
<dbReference type="PIR" id="T18532">
    <property type="entry name" value="T18532"/>
</dbReference>
<dbReference type="RefSeq" id="NP_001166491.1">
    <property type="nucleotide sequence ID" value="NM_001173020.1"/>
</dbReference>
<dbReference type="SMR" id="O55092"/>
<dbReference type="FunCoup" id="O55092">
    <property type="interactions" value="3005"/>
</dbReference>
<dbReference type="STRING" id="10141.ENSCPOP00000000891"/>
<dbReference type="GeneID" id="100135621"/>
<dbReference type="KEGG" id="cpoc:100135621"/>
<dbReference type="CTD" id="9748"/>
<dbReference type="eggNOG" id="KOG0579">
    <property type="taxonomic scope" value="Eukaryota"/>
</dbReference>
<dbReference type="InParanoid" id="O55092"/>
<dbReference type="OrthoDB" id="10027016at2759"/>
<dbReference type="Proteomes" id="UP000005447">
    <property type="component" value="Unassembled WGS sequence"/>
</dbReference>
<dbReference type="GO" id="GO:0031252">
    <property type="term" value="C:cell leading edge"/>
    <property type="evidence" value="ECO:0000250"/>
    <property type="project" value="UniProtKB"/>
</dbReference>
<dbReference type="GO" id="GO:0005737">
    <property type="term" value="C:cytoplasm"/>
    <property type="evidence" value="ECO:0000250"/>
    <property type="project" value="UniProtKB"/>
</dbReference>
<dbReference type="GO" id="GO:0048471">
    <property type="term" value="C:perinuclear region of cytoplasm"/>
    <property type="evidence" value="ECO:0000250"/>
    <property type="project" value="UniProtKB"/>
</dbReference>
<dbReference type="GO" id="GO:0005524">
    <property type="term" value="F:ATP binding"/>
    <property type="evidence" value="ECO:0007669"/>
    <property type="project" value="UniProtKB-KW"/>
</dbReference>
<dbReference type="GO" id="GO:0042803">
    <property type="term" value="F:protein homodimerization activity"/>
    <property type="evidence" value="ECO:0000250"/>
    <property type="project" value="UniProtKB"/>
</dbReference>
<dbReference type="GO" id="GO:0106310">
    <property type="term" value="F:protein serine kinase activity"/>
    <property type="evidence" value="ECO:0007669"/>
    <property type="project" value="RHEA"/>
</dbReference>
<dbReference type="GO" id="GO:0004674">
    <property type="term" value="F:protein serine/threonine kinase activity"/>
    <property type="evidence" value="ECO:0000250"/>
    <property type="project" value="UniProtKB"/>
</dbReference>
<dbReference type="GO" id="GO:0006915">
    <property type="term" value="P:apoptotic process"/>
    <property type="evidence" value="ECO:0007669"/>
    <property type="project" value="UniProtKB-KW"/>
</dbReference>
<dbReference type="GO" id="GO:0046777">
    <property type="term" value="P:protein autophosphorylation"/>
    <property type="evidence" value="ECO:0000250"/>
    <property type="project" value="UniProtKB"/>
</dbReference>
<dbReference type="GO" id="GO:0030334">
    <property type="term" value="P:regulation of cell migration"/>
    <property type="evidence" value="ECO:0000250"/>
    <property type="project" value="UniProtKB"/>
</dbReference>
<dbReference type="GO" id="GO:0051893">
    <property type="term" value="P:regulation of focal adhesion assembly"/>
    <property type="evidence" value="ECO:0000250"/>
    <property type="project" value="UniProtKB"/>
</dbReference>
<dbReference type="CDD" id="cd06643">
    <property type="entry name" value="STKc_SLK"/>
    <property type="match status" value="1"/>
</dbReference>
<dbReference type="FunFam" id="1.10.510.10:FF:000081">
    <property type="entry name" value="STE20-like serine/threonine-protein kinase"/>
    <property type="match status" value="1"/>
</dbReference>
<dbReference type="FunFam" id="3.30.200.20:FF:000120">
    <property type="entry name" value="STE20-like serine/threonine-protein kinase"/>
    <property type="match status" value="1"/>
</dbReference>
<dbReference type="Gene3D" id="3.30.200.20">
    <property type="entry name" value="Phosphorylase Kinase, domain 1"/>
    <property type="match status" value="1"/>
</dbReference>
<dbReference type="Gene3D" id="1.10.510.10">
    <property type="entry name" value="Transferase(Phosphotransferase) domain 1"/>
    <property type="match status" value="1"/>
</dbReference>
<dbReference type="InterPro" id="IPR011009">
    <property type="entry name" value="Kinase-like_dom_sf"/>
</dbReference>
<dbReference type="InterPro" id="IPR022165">
    <property type="entry name" value="PKK"/>
</dbReference>
<dbReference type="InterPro" id="IPR000719">
    <property type="entry name" value="Prot_kinase_dom"/>
</dbReference>
<dbReference type="InterPro" id="IPR017441">
    <property type="entry name" value="Protein_kinase_ATP_BS"/>
</dbReference>
<dbReference type="InterPro" id="IPR008271">
    <property type="entry name" value="Ser/Thr_kinase_AS"/>
</dbReference>
<dbReference type="InterPro" id="IPR051585">
    <property type="entry name" value="STE20_Ser/Thr_Kinases"/>
</dbReference>
<dbReference type="InterPro" id="IPR001943">
    <property type="entry name" value="UVR_dom"/>
</dbReference>
<dbReference type="PANTHER" id="PTHR46538:SF1">
    <property type="entry name" value="NON-SPECIFIC SERINE_THREONINE PROTEIN KINASE"/>
    <property type="match status" value="1"/>
</dbReference>
<dbReference type="PANTHER" id="PTHR46538">
    <property type="entry name" value="PROTEIN KINASE DOMAIN-CONTAINING PROTEIN"/>
    <property type="match status" value="1"/>
</dbReference>
<dbReference type="Pfam" id="PF00069">
    <property type="entry name" value="Pkinase"/>
    <property type="match status" value="1"/>
</dbReference>
<dbReference type="Pfam" id="PF12474">
    <property type="entry name" value="PKK"/>
    <property type="match status" value="2"/>
</dbReference>
<dbReference type="SMART" id="SM00220">
    <property type="entry name" value="S_TKc"/>
    <property type="match status" value="1"/>
</dbReference>
<dbReference type="SUPFAM" id="SSF56112">
    <property type="entry name" value="Protein kinase-like (PK-like)"/>
    <property type="match status" value="1"/>
</dbReference>
<dbReference type="PROSITE" id="PS00107">
    <property type="entry name" value="PROTEIN_KINASE_ATP"/>
    <property type="match status" value="1"/>
</dbReference>
<dbReference type="PROSITE" id="PS50011">
    <property type="entry name" value="PROTEIN_KINASE_DOM"/>
    <property type="match status" value="1"/>
</dbReference>
<dbReference type="PROSITE" id="PS00108">
    <property type="entry name" value="PROTEIN_KINASE_ST"/>
    <property type="match status" value="1"/>
</dbReference>
<dbReference type="PROSITE" id="PS50151">
    <property type="entry name" value="UVR"/>
    <property type="match status" value="1"/>
</dbReference>
<protein>
    <recommendedName>
        <fullName>STE20-like serine/threonine-protein kinase</fullName>
        <shortName>STE20-like kinase</shortName>
        <ecNumber>2.7.11.1</ecNumber>
    </recommendedName>
    <alternativeName>
        <fullName>STE20-related serine/threonine-protein kinase</fullName>
        <shortName>STE20-related kinase</shortName>
    </alternativeName>
</protein>
<name>SLK_CAVPO</name>
<evidence type="ECO:0000250" key="1"/>
<evidence type="ECO:0000250" key="2">
    <source>
        <dbReference type="UniProtKB" id="O08815"/>
    </source>
</evidence>
<evidence type="ECO:0000250" key="3">
    <source>
        <dbReference type="UniProtKB" id="O54988"/>
    </source>
</evidence>
<evidence type="ECO:0000250" key="4">
    <source>
        <dbReference type="UniProtKB" id="Q9H2G2"/>
    </source>
</evidence>
<evidence type="ECO:0000255" key="5"/>
<evidence type="ECO:0000255" key="6">
    <source>
        <dbReference type="PROSITE-ProRule" id="PRU00159"/>
    </source>
</evidence>
<evidence type="ECO:0000255" key="7">
    <source>
        <dbReference type="PROSITE-ProRule" id="PRU00217"/>
    </source>
</evidence>
<evidence type="ECO:0000255" key="8">
    <source>
        <dbReference type="PROSITE-ProRule" id="PRU10027"/>
    </source>
</evidence>
<evidence type="ECO:0000256" key="9">
    <source>
        <dbReference type="SAM" id="MobiDB-lite"/>
    </source>
</evidence>
<evidence type="ECO:0000269" key="10">
    <source>
    </source>
</evidence>
<evidence type="ECO:0000305" key="11"/>
<reference key="1">
    <citation type="journal article" date="1997" name="Arch. Biochem. Biophys.">
        <title>Molecular cloning and characterization of a novel putative STE20-like kinase in guinea pigs.</title>
        <authorList>
            <person name="Itoh S."/>
            <person name="Kameda Y."/>
            <person name="Yamada E."/>
            <person name="Tsujikawa K."/>
            <person name="Mimura T."/>
            <person name="Kohama Y."/>
        </authorList>
    </citation>
    <scope>NUCLEOTIDE SEQUENCE [MRNA]</scope>
    <scope>TISSUE SPECIFICITY</scope>
    <scope>PHOSPHORYLATION</scope>
    <source>
        <strain>Hartley</strain>
        <tissue>Liver</tissue>
    </source>
</reference>